<organism>
    <name type="scientific">Cavia porcellus</name>
    <name type="common">Guinea pig</name>
    <dbReference type="NCBI Taxonomy" id="10141"/>
    <lineage>
        <taxon>Eukaryota</taxon>
        <taxon>Metazoa</taxon>
        <taxon>Chordata</taxon>
        <taxon>Craniata</taxon>
        <taxon>Vertebrata</taxon>
        <taxon>Euteleostomi</taxon>
        <taxon>Mammalia</taxon>
        <taxon>Eutheria</taxon>
        <taxon>Euarchontoglires</taxon>
        <taxon>Glires</taxon>
        <taxon>Rodentia</taxon>
        <taxon>Hystricomorpha</taxon>
        <taxon>Caviidae</taxon>
        <taxon>Cavia</taxon>
    </lineage>
</organism>
<sequence length="142" mass="16356">MGAPSLPRAWQLYLKEHRVSTFKNWPFVNGCSCTPERMAEAGFIHCPTENEPDLAQCFFCFKELEGWEPDDNPIEEHKKHSSGCAFLSVKKQFEELTLSEFLKLDKERAKNKIAKETNSKQKEFEETAAKVRQAMEQLAALE</sequence>
<gene>
    <name evidence="6 10" type="primary">BIRC5</name>
</gene>
<comment type="function">
    <text evidence="1 3 4 5">Multitasking protein that has dual roles in promoting cell proliferation and preventing apoptosis (PubMed:20627126, PubMed:20727954, PubMed:21364656). Component of a chromosome passage protein complex (CPC) which is essential for chromosome alignment and segregation during mitosis and cytokinesis (PubMed:20727954). Acts as an important regulator of the localization of this complex; directs CPC movement to different locations from the inner centromere during prometaphase to midbody during cytokinesis and participates in the organization of the center spindle by associating with polymerized microtubules (By similarity). Involved in the recruitment of CPC to centromeres during early mitosis via association with histone H3 phosphorylated at 'Thr-3' (H3pT3) during mitosis (By similarity). The complex with RAN plays a role in mitotic spindle formation by serving as a physical scaffold to help deliver the RAN effector molecule TPX2 to microtubules (By similarity). May counteract a default induction of apoptosis in G2/M phase (By similarity). The acetylated form represses STAT3 transactivation of target gene promoters (By similarity). May play a role in neoplasia. Inhibitor of CASP3 and CASP7 (By similarity). Essential for the maintenance of mitochondrial integrity and function (By similarity).</text>
</comment>
<comment type="subunit">
    <text evidence="1">Monomer or homodimer. Exists as a homodimer in the apo state and as a monomer in the CPC-bound state. The monomer protects cells against apoptosis more efficiently than the dimer. Only the dimeric form is capable of enhancing tubulin stability in cells. When phosphorylated, interacts with LAMTOR5/HBXIP; the resulting complex binds pro-CASP9, as well as active CASP9, but much less efficiently. Component of the chromosomal passenger complex (CPC) composed of at least BIRC5/survivin, CDCA8/borealin, INCENP, AURKB or AURKC; in the complex forms a triple-helix bundle-based subcomplex with INCENP and CDCA8. Interacts with JTB. Interacts (via BIR domain) with histone H3 phosphorylated at 'Thr-3' (H3pT3). Interacts with EVI5. Interacts with GTP-bound RAN in both the S and M phases of the cell cycle. Interacts with USP9X. Interacts with tubulin. Interacts with BIRC2/c-IAP1. The monomeric form interacts with XIAP/BIRC4. Both the dimeric and monomeric form can interact with DIABLO/SMAC. Interacts with BIRC6/bruce. Interacts with FBXL7; this interaction facilitates the polyubiquitination and subsequent proteasomal degradation of BIRC5 by the SCF(FBXL7) E3 ubiquitin-protein ligase complex (By similarity).</text>
</comment>
<comment type="subcellular location">
    <subcellularLocation>
        <location evidence="3 4 5">Cytoplasm</location>
    </subcellularLocation>
    <subcellularLocation>
        <location evidence="3 4 5">Nucleus</location>
    </subcellularLocation>
    <subcellularLocation>
        <location evidence="1">Chromosome</location>
    </subcellularLocation>
    <subcellularLocation>
        <location evidence="4">Chromosome</location>
        <location evidence="4">Centromere</location>
    </subcellularLocation>
    <subcellularLocation>
        <location evidence="4">Cytoplasm</location>
        <location evidence="4">Cytoskeleton</location>
        <location evidence="4">Spindle</location>
    </subcellularLocation>
    <subcellularLocation>
        <location evidence="1">Chromosome</location>
        <location evidence="1">Centromere</location>
        <location evidence="1">Kinetochore</location>
    </subcellularLocation>
    <subcellularLocation>
        <location evidence="4">Midbody</location>
    </subcellularLocation>
    <text evidence="1 3 4 5">Localizes at the centromeres from prophase to metaphase, at the spindle midzone during anaphase and a the midbody during telophase and cytokinesis. Accumulates in the nucleus upon treatment with leptomycin B (LMB), a XPO1/CRM1 nuclear export inhibitor (PubMed:20727954). Localizes on chromosome arms and inner centromeres from prophase through metaphase. Localizes to kinetochores in metaphase, distributes to the midzone microtubules in anaphase and at telophase, localizes exclusively to the midbody. Colocalizes with AURKB at mitotic chromosomes (By similarity).</text>
</comment>
<comment type="tissue specificity">
    <text evidence="3 4 5">Expressed in spleen, lung, brain, heart, kidney and intestine (at protein level) (PubMed:20727954). Expressed in cochlea including the organ of Corti, the lateral wall, the interdental cells of the Limbus as well as in cells of the cochlear nerve and the spiral ganglions (at protein level) (PubMed:20627126, PubMed:20727954, PubMed:21364656). Also expressed in Schwann cells (at protein level) (PubMed:20627126, PubMed:21364656). Not expressed in cells of the inner and outer sulcus or the Reissner's membrane (at protein level) (PubMed:20627126, PubMed:20727954, PubMed:21364656).</text>
</comment>
<comment type="induction">
    <text evidence="3 5">Expression is up-regulated in the spiral ligament and nerve fibers of the cochlea upon moderate noise exposure causing only a temporary hearing impairment. Expression is down-regulated in the organ of Corti, the spiral ganglion, the stria vascularis and the spiral ligament of the cochlea upon intratympanic injection of aminoglycoside antibiotic gentamicin inducing cell damage and permanent hearing loss.</text>
</comment>
<comment type="domain">
    <text evidence="1">The BIR repeat is necessary and sufficient for LAMTOR5 binding.</text>
</comment>
<comment type="PTM">
    <text evidence="1">Ubiquitinated by the Cul9-RING ubiquitin-protein ligase complex, leading to its degradation. Ubiquitination is required for centrosomal targeting. Deubiquitinated by USP35 or USP38; leading to stabilization.</text>
</comment>
<comment type="PTM">
    <text evidence="1">In vitro phosphorylation at Thr-117 by AURKB prevents interaction with INCENP and localization to mitotic chromosomes. Phosphorylation at Thr-48 by CK2 is critical for its mitotic and anti-apoptotic activities. Phosphorylation at Thr-34 by CDK15 is critical for its anti-apoptotic activity. Phosphorylation at Ser-20 by AURKC is critical for regulation of proper chromosome alignment and segregation, and possibly cytokinesis.</text>
</comment>
<comment type="similarity">
    <text evidence="9">Belongs to the IAP family.</text>
</comment>
<feature type="chain" id="PRO_0000440217" description="Baculoviral IAP repeat-containing protein 5">
    <location>
        <begin position="1"/>
        <end position="142"/>
    </location>
</feature>
<feature type="repeat" description="BIR" evidence="2">
    <location>
        <begin position="18"/>
        <end position="88"/>
    </location>
</feature>
<feature type="binding site" evidence="2">
    <location>
        <position position="57"/>
    </location>
    <ligand>
        <name>Zn(2+)</name>
        <dbReference type="ChEBI" id="CHEBI:29105"/>
    </ligand>
</feature>
<feature type="binding site" evidence="2">
    <location>
        <position position="60"/>
    </location>
    <ligand>
        <name>Zn(2+)</name>
        <dbReference type="ChEBI" id="CHEBI:29105"/>
    </ligand>
</feature>
<feature type="binding site" evidence="2">
    <location>
        <position position="77"/>
    </location>
    <ligand>
        <name>Zn(2+)</name>
        <dbReference type="ChEBI" id="CHEBI:29105"/>
    </ligand>
</feature>
<feature type="binding site" evidence="2">
    <location>
        <position position="84"/>
    </location>
    <ligand>
        <name>Zn(2+)</name>
        <dbReference type="ChEBI" id="CHEBI:29105"/>
    </ligand>
</feature>
<feature type="site" description="Interaction with FBXL7" evidence="1">
    <location>
        <position position="126"/>
    </location>
</feature>
<feature type="modified residue" description="Phosphoserine; by AURKC" evidence="1">
    <location>
        <position position="20"/>
    </location>
</feature>
<feature type="modified residue" description="N6-acetyllysine" evidence="1">
    <location>
        <position position="23"/>
    </location>
</feature>
<feature type="modified residue" description="Phosphothreonine; by CDK1 and CDK15" evidence="1">
    <location>
        <position position="34"/>
    </location>
</feature>
<feature type="modified residue" description="Phosphothreonine; by CK2; in vitro" evidence="1">
    <location>
        <position position="48"/>
    </location>
</feature>
<feature type="modified residue" description="N6-acetyllysine" evidence="1">
    <location>
        <position position="90"/>
    </location>
</feature>
<feature type="modified residue" description="N6-acetyllysine" evidence="1">
    <location>
        <position position="110"/>
    </location>
</feature>
<feature type="modified residue" description="N6-acetyllysine" evidence="1">
    <location>
        <position position="112"/>
    </location>
</feature>
<feature type="modified residue" description="N6-acetyllysine" evidence="1">
    <location>
        <position position="115"/>
    </location>
</feature>
<feature type="modified residue" description="Phosphothreonine; by AURKB" evidence="1">
    <location>
        <position position="117"/>
    </location>
</feature>
<feature type="mutagenesis site" description="Disrupts nuclear export and loss of cytoprotection; when associated with A-96 and A-98." evidence="4">
    <original>F</original>
    <variation>P</variation>
    <location>
        <position position="93"/>
    </location>
</feature>
<feature type="mutagenesis site" description="Disrupts nuclear export and loss of cytoprotection; when associated with P-93 and A-98." evidence="4">
    <original>L</original>
    <variation>A</variation>
    <location>
        <position position="96"/>
    </location>
</feature>
<feature type="mutagenesis site" description="Disrupts nuclear export and loss of cytoprotection; when associated with P-93 and A-96." evidence="4">
    <original>L</original>
    <variation>A</variation>
    <location>
        <position position="98"/>
    </location>
</feature>
<reference evidence="10" key="1">
    <citation type="journal article" date="2010" name="Gene">
        <title>Cloning and functional characterization of the guinea pig apoptosis inhibitor protein Survivin.</title>
        <authorList>
            <person name="Habtemichael N."/>
            <person name="Wunsch D."/>
            <person name="Bier C."/>
            <person name="Tillmann S."/>
            <person name="Unruhe B."/>
            <person name="Frauenknecht K."/>
            <person name="Heinrich U.R."/>
            <person name="Mann W.J."/>
            <person name="Stauber R.H."/>
            <person name="Knauer S.K."/>
        </authorList>
    </citation>
    <scope>NUCLEOTIDE SEQUENCE [MRNA]</scope>
    <scope>FUNCTION</scope>
    <scope>SUBCELLULAR LOCATION</scope>
    <scope>TISSUE SPECIFICITY</scope>
    <scope>MUTAGENESIS OF PHE-93; LEU-96 AND LEU-98</scope>
    <scope>PHYLOGENETIC ANALYSIS</scope>
    <source>
        <tissue evidence="7">Spleen</tissue>
    </source>
</reference>
<reference evidence="11" key="2">
    <citation type="journal article" date="2011" name="Nature">
        <title>A high-resolution map of human evolutionary constraint using 29 mammals.</title>
        <authorList>
            <person name="Lindblad-Toh K."/>
            <person name="Garber M."/>
            <person name="Zuk O."/>
            <person name="Lin M.F."/>
            <person name="Parker B.J."/>
            <person name="Washietl S."/>
            <person name="Kheradpour P."/>
            <person name="Ernst J."/>
            <person name="Jordan G."/>
            <person name="Mauceli E."/>
            <person name="Ward L.D."/>
            <person name="Lowe C.B."/>
            <person name="Holloway A.K."/>
            <person name="Clamp M."/>
            <person name="Gnerre S."/>
            <person name="Alfoldi J."/>
            <person name="Beal K."/>
            <person name="Chang J."/>
            <person name="Clawson H."/>
            <person name="Cuff J."/>
            <person name="Di Palma F."/>
            <person name="Fitzgerald S."/>
            <person name="Flicek P."/>
            <person name="Guttman M."/>
            <person name="Hubisz M.J."/>
            <person name="Jaffe D.B."/>
            <person name="Jungreis I."/>
            <person name="Kent W.J."/>
            <person name="Kostka D."/>
            <person name="Lara M."/>
            <person name="Martins A.L."/>
            <person name="Massingham T."/>
            <person name="Moltke I."/>
            <person name="Raney B.J."/>
            <person name="Rasmussen M.D."/>
            <person name="Robinson J."/>
            <person name="Stark A."/>
            <person name="Vilella A.J."/>
            <person name="Wen J."/>
            <person name="Xie X."/>
            <person name="Zody M.C."/>
            <person name="Baldwin J."/>
            <person name="Bloom T."/>
            <person name="Chin C.W."/>
            <person name="Heiman D."/>
            <person name="Nicol R."/>
            <person name="Nusbaum C."/>
            <person name="Young S."/>
            <person name="Wilkinson J."/>
            <person name="Worley K.C."/>
            <person name="Kovar C.L."/>
            <person name="Muzny D.M."/>
            <person name="Gibbs R.A."/>
            <person name="Cree A."/>
            <person name="Dihn H.H."/>
            <person name="Fowler G."/>
            <person name="Jhangiani S."/>
            <person name="Joshi V."/>
            <person name="Lee S."/>
            <person name="Lewis L.R."/>
            <person name="Nazareth L.V."/>
            <person name="Okwuonu G."/>
            <person name="Santibanez J."/>
            <person name="Warren W.C."/>
            <person name="Mardis E.R."/>
            <person name="Weinstock G.M."/>
            <person name="Wilson R.K."/>
            <person name="Delehaunty K."/>
            <person name="Dooling D."/>
            <person name="Fronik C."/>
            <person name="Fulton L."/>
            <person name="Fulton B."/>
            <person name="Graves T."/>
            <person name="Minx P."/>
            <person name="Sodergren E."/>
            <person name="Birney E."/>
            <person name="Margulies E.H."/>
            <person name="Herrero J."/>
            <person name="Green E.D."/>
            <person name="Haussler D."/>
            <person name="Siepel A."/>
            <person name="Goldman N."/>
            <person name="Pollard K.S."/>
            <person name="Pedersen J.S."/>
            <person name="Lander E.S."/>
            <person name="Kellis M."/>
        </authorList>
    </citation>
    <scope>NUCLEOTIDE SEQUENCE [LARGE SCALE GENOMIC DNA]</scope>
    <source>
        <strain evidence="11">2N</strain>
    </source>
</reference>
<reference key="3">
    <citation type="journal article" date="2010" name="Cell Death Dis.">
        <title>An otoprotective role for the apoptosis inhibitor protein survivin.</title>
        <authorList>
            <person name="Knauer S.K."/>
            <person name="Heinrich U.R."/>
            <person name="Bier C."/>
            <person name="Habtemichael N."/>
            <person name="Docter D."/>
            <person name="Helling K."/>
            <person name="Mann W.J."/>
            <person name="Stauber R.H."/>
        </authorList>
    </citation>
    <scope>FUNCTION</scope>
    <scope>SUBCELLULAR LOCATION</scope>
    <scope>TISSUE SPECIFICITY</scope>
    <scope>INDUCTION</scope>
</reference>
<reference key="4">
    <citation type="journal article" date="2010" name="Mol. Cell. Neurosci.">
        <title>Expression analysis suggests a potential cytoprotective role of Birc5 in the inner ear.</title>
        <authorList>
            <person name="Habtemichael N."/>
            <person name="Heinrich U.R."/>
            <person name="Knauer S.K."/>
            <person name="Schmidtmann I."/>
            <person name="Bier C."/>
            <person name="Docter D."/>
            <person name="Brochhausen C."/>
            <person name="Helling K."/>
            <person name="Brieger J."/>
            <person name="Stauber R.H."/>
            <person name="Mann W.J."/>
        </authorList>
    </citation>
    <scope>FUNCTION</scope>
    <scope>SUBCELLULAR LOCATION</scope>
    <scope>TISSUE SPECIFICITY</scope>
    <scope>INDUCTION</scope>
</reference>
<keyword id="KW-0007">Acetylation</keyword>
<keyword id="KW-0053">Apoptosis</keyword>
<keyword id="KW-0131">Cell cycle</keyword>
<keyword id="KW-0132">Cell division</keyword>
<keyword id="KW-0137">Centromere</keyword>
<keyword id="KW-0158">Chromosome</keyword>
<keyword id="KW-0159">Chromosome partition</keyword>
<keyword id="KW-0963">Cytoplasm</keyword>
<keyword id="KW-0206">Cytoskeleton</keyword>
<keyword id="KW-0995">Kinetochore</keyword>
<keyword id="KW-0479">Metal-binding</keyword>
<keyword id="KW-0493">Microtubule</keyword>
<keyword id="KW-0498">Mitosis</keyword>
<keyword id="KW-0539">Nucleus</keyword>
<keyword id="KW-0597">Phosphoprotein</keyword>
<keyword id="KW-0646">Protease inhibitor</keyword>
<keyword id="KW-1185">Reference proteome</keyword>
<keyword id="KW-0678">Repressor</keyword>
<keyword id="KW-0346">Stress response</keyword>
<keyword id="KW-0789">Thiol protease inhibitor</keyword>
<keyword id="KW-0804">Transcription</keyword>
<keyword id="KW-0805">Transcription regulation</keyword>
<keyword id="KW-0832">Ubl conjugation</keyword>
<keyword id="KW-0862">Zinc</keyword>
<accession>E3SCZ8</accession>
<proteinExistence type="evidence at protein level"/>
<evidence type="ECO:0000250" key="1">
    <source>
        <dbReference type="UniProtKB" id="O15392"/>
    </source>
</evidence>
<evidence type="ECO:0000255" key="2">
    <source>
        <dbReference type="PROSITE-ProRule" id="PRU00029"/>
    </source>
</evidence>
<evidence type="ECO:0000269" key="3">
    <source>
    </source>
</evidence>
<evidence type="ECO:0000269" key="4">
    <source>
    </source>
</evidence>
<evidence type="ECO:0000269" key="5">
    <source>
    </source>
</evidence>
<evidence type="ECO:0000303" key="6">
    <source>
    </source>
</evidence>
<evidence type="ECO:0000303" key="7">
    <source>
    </source>
</evidence>
<evidence type="ECO:0000303" key="8">
    <source>
    </source>
</evidence>
<evidence type="ECO:0000305" key="9"/>
<evidence type="ECO:0000312" key="10">
    <source>
        <dbReference type="EMBL" id="ACZ18223.1"/>
    </source>
</evidence>
<evidence type="ECO:0000312" key="11">
    <source>
        <dbReference type="Proteomes" id="UP000005447"/>
    </source>
</evidence>
<dbReference type="EMBL" id="GQ496319">
    <property type="protein sequence ID" value="ACZ18223.1"/>
    <property type="molecule type" value="mRNA"/>
</dbReference>
<dbReference type="EMBL" id="AAKN02047321">
    <property type="status" value="NOT_ANNOTATED_CDS"/>
    <property type="molecule type" value="Genomic_DNA"/>
</dbReference>
<dbReference type="RefSeq" id="NP_001186646.1">
    <property type="nucleotide sequence ID" value="NM_001199717.1"/>
</dbReference>
<dbReference type="SMR" id="E3SCZ8"/>
<dbReference type="FunCoup" id="E3SCZ8">
    <property type="interactions" value="1089"/>
</dbReference>
<dbReference type="STRING" id="10141.ENSCPOP00000023297"/>
<dbReference type="MEROPS" id="I32.005"/>
<dbReference type="Ensembl" id="ENSCPOT00000039725.1">
    <property type="protein sequence ID" value="ENSCPOP00000023297.1"/>
    <property type="gene ID" value="ENSCPOG00000040469.1"/>
</dbReference>
<dbReference type="GeneID" id="100527953"/>
<dbReference type="KEGG" id="cpoc:100527953"/>
<dbReference type="CTD" id="332"/>
<dbReference type="VEuPathDB" id="HostDB:ENSCPOG00000040469"/>
<dbReference type="eggNOG" id="KOG1101">
    <property type="taxonomic scope" value="Eukaryota"/>
</dbReference>
<dbReference type="GeneTree" id="ENSGT00510000047537"/>
<dbReference type="HOGENOM" id="CLU_016347_0_1_1"/>
<dbReference type="InParanoid" id="E3SCZ8"/>
<dbReference type="OMA" id="IKMYFYE"/>
<dbReference type="OrthoDB" id="2196114at2759"/>
<dbReference type="TreeFam" id="TF342652"/>
<dbReference type="Proteomes" id="UP000005447">
    <property type="component" value="Unassembled WGS sequence"/>
</dbReference>
<dbReference type="Bgee" id="ENSCPOG00000040469">
    <property type="expression patterns" value="Expressed in testis and 13 other cell types or tissues"/>
</dbReference>
<dbReference type="GO" id="GO:0000775">
    <property type="term" value="C:chromosome, centromeric region"/>
    <property type="evidence" value="ECO:0000314"/>
    <property type="project" value="UniProtKB"/>
</dbReference>
<dbReference type="GO" id="GO:0005737">
    <property type="term" value="C:cytoplasm"/>
    <property type="evidence" value="ECO:0000314"/>
    <property type="project" value="UniProtKB"/>
</dbReference>
<dbReference type="GO" id="GO:0000776">
    <property type="term" value="C:kinetochore"/>
    <property type="evidence" value="ECO:0007669"/>
    <property type="project" value="UniProtKB-KW"/>
</dbReference>
<dbReference type="GO" id="GO:0005874">
    <property type="term" value="C:microtubule"/>
    <property type="evidence" value="ECO:0007669"/>
    <property type="project" value="UniProtKB-KW"/>
</dbReference>
<dbReference type="GO" id="GO:0030496">
    <property type="term" value="C:midbody"/>
    <property type="evidence" value="ECO:0000314"/>
    <property type="project" value="UniProtKB"/>
</dbReference>
<dbReference type="GO" id="GO:0005634">
    <property type="term" value="C:nucleus"/>
    <property type="evidence" value="ECO:0000314"/>
    <property type="project" value="UniProtKB"/>
</dbReference>
<dbReference type="GO" id="GO:0051233">
    <property type="term" value="C:spindle midzone"/>
    <property type="evidence" value="ECO:0000314"/>
    <property type="project" value="UniProtKB"/>
</dbReference>
<dbReference type="GO" id="GO:0004869">
    <property type="term" value="F:cysteine-type endopeptidase inhibitor activity"/>
    <property type="evidence" value="ECO:0007669"/>
    <property type="project" value="UniProtKB-KW"/>
</dbReference>
<dbReference type="GO" id="GO:0046872">
    <property type="term" value="F:metal ion binding"/>
    <property type="evidence" value="ECO:0007669"/>
    <property type="project" value="UniProtKB-KW"/>
</dbReference>
<dbReference type="GO" id="GO:0006915">
    <property type="term" value="P:apoptotic process"/>
    <property type="evidence" value="ECO:0007669"/>
    <property type="project" value="UniProtKB-KW"/>
</dbReference>
<dbReference type="GO" id="GO:0051301">
    <property type="term" value="P:cell division"/>
    <property type="evidence" value="ECO:0007669"/>
    <property type="project" value="UniProtKB-KW"/>
</dbReference>
<dbReference type="GO" id="GO:0007059">
    <property type="term" value="P:chromosome segregation"/>
    <property type="evidence" value="ECO:0007669"/>
    <property type="project" value="UniProtKB-KW"/>
</dbReference>
<dbReference type="GO" id="GO:0007127">
    <property type="term" value="P:meiosis I"/>
    <property type="evidence" value="ECO:0007669"/>
    <property type="project" value="Ensembl"/>
</dbReference>
<dbReference type="GO" id="GO:0000226">
    <property type="term" value="P:microtubule cytoskeleton organization"/>
    <property type="evidence" value="ECO:0007669"/>
    <property type="project" value="Ensembl"/>
</dbReference>
<dbReference type="GO" id="GO:0043066">
    <property type="term" value="P:negative regulation of apoptotic process"/>
    <property type="evidence" value="ECO:0000314"/>
    <property type="project" value="UniProtKB"/>
</dbReference>
<dbReference type="GO" id="GO:0043524">
    <property type="term" value="P:negative regulation of neuron apoptotic process"/>
    <property type="evidence" value="ECO:0007669"/>
    <property type="project" value="Ensembl"/>
</dbReference>
<dbReference type="GO" id="GO:0061178">
    <property type="term" value="P:regulation of insulin secretion involved in cellular response to glucose stimulus"/>
    <property type="evidence" value="ECO:0007669"/>
    <property type="project" value="Ensembl"/>
</dbReference>
<dbReference type="GO" id="GO:0007346">
    <property type="term" value="P:regulation of mitotic cell cycle"/>
    <property type="evidence" value="ECO:0007669"/>
    <property type="project" value="Ensembl"/>
</dbReference>
<dbReference type="GO" id="GO:0061469">
    <property type="term" value="P:regulation of type B pancreatic cell proliferation"/>
    <property type="evidence" value="ECO:0007669"/>
    <property type="project" value="Ensembl"/>
</dbReference>
<dbReference type="GO" id="GO:0007605">
    <property type="term" value="P:sensory perception of sound"/>
    <property type="evidence" value="ECO:0000270"/>
    <property type="project" value="UniProtKB"/>
</dbReference>
<dbReference type="CDD" id="cd00022">
    <property type="entry name" value="BIR"/>
    <property type="match status" value="1"/>
</dbReference>
<dbReference type="FunFam" id="1.10.1170.10:FF:000009">
    <property type="entry name" value="Baculoviral IAP repeat-containing protein 5"/>
    <property type="match status" value="1"/>
</dbReference>
<dbReference type="Gene3D" id="1.10.1170.10">
    <property type="entry name" value="Inhibitor Of Apoptosis Protein (2mihbC-IAP-1), Chain A"/>
    <property type="match status" value="1"/>
</dbReference>
<dbReference type="InterPro" id="IPR051190">
    <property type="entry name" value="Baculoviral_IAP"/>
</dbReference>
<dbReference type="InterPro" id="IPR001370">
    <property type="entry name" value="BIR_rpt"/>
</dbReference>
<dbReference type="PANTHER" id="PTHR46771:SF3">
    <property type="entry name" value="BACULOVIRAL IAP REPEAT-CONTAINING PROTEIN 5"/>
    <property type="match status" value="1"/>
</dbReference>
<dbReference type="PANTHER" id="PTHR46771">
    <property type="entry name" value="DETERIN"/>
    <property type="match status" value="1"/>
</dbReference>
<dbReference type="Pfam" id="PF00653">
    <property type="entry name" value="BIR"/>
    <property type="match status" value="1"/>
</dbReference>
<dbReference type="SMART" id="SM00238">
    <property type="entry name" value="BIR"/>
    <property type="match status" value="1"/>
</dbReference>
<dbReference type="SUPFAM" id="SSF57924">
    <property type="entry name" value="Inhibitor of apoptosis (IAP) repeat"/>
    <property type="match status" value="1"/>
</dbReference>
<dbReference type="PROSITE" id="PS50143">
    <property type="entry name" value="BIR_REPEAT_2"/>
    <property type="match status" value="1"/>
</dbReference>
<protein>
    <recommendedName>
        <fullName evidence="9">Baculoviral IAP repeat-containing protein 5</fullName>
    </recommendedName>
    <alternativeName>
        <fullName evidence="7 8">Apoptosis inhibitor survivin</fullName>
    </alternativeName>
</protein>
<name>BIRC5_CAVPO</name>